<accession>O35961</accession>
<proteinExistence type="inferred from homology"/>
<feature type="signal peptide" evidence="1">
    <location>
        <begin position="1"/>
        <end position="20"/>
    </location>
</feature>
<feature type="chain" id="PRO_0000022378" description="Submaxillary gland androgen-regulated protein 2, isoform epsilon">
    <location>
        <begin position="21"/>
        <end position="40"/>
    </location>
</feature>
<keyword id="KW-0025">Alternative splicing</keyword>
<keyword id="KW-0216">Detoxification</keyword>
<keyword id="KW-1185">Reference proteome</keyword>
<keyword id="KW-0964">Secreted</keyword>
<keyword id="KW-0732">Signal</keyword>
<evidence type="ECO:0000255" key="1"/>
<dbReference type="EMBL" id="U82379">
    <property type="protein sequence ID" value="AAB93517.1"/>
    <property type="molecule type" value="mRNA"/>
</dbReference>
<dbReference type="EMBL" id="U82375">
    <property type="protein sequence ID" value="AAB93511.1"/>
    <property type="molecule type" value="Genomic_DNA"/>
</dbReference>
<dbReference type="SMR" id="O35961"/>
<dbReference type="AGR" id="MGI:102762"/>
<dbReference type="MGI" id="MGI:102762">
    <property type="gene designation" value="Smr2"/>
</dbReference>
<dbReference type="OrthoDB" id="9635060at2759"/>
<dbReference type="ChiTaRS" id="Smr2">
    <property type="organism name" value="mouse"/>
</dbReference>
<dbReference type="Proteomes" id="UP000000589">
    <property type="component" value="Unplaced"/>
</dbReference>
<dbReference type="GO" id="GO:0005576">
    <property type="term" value="C:extracellular region"/>
    <property type="evidence" value="ECO:0007669"/>
    <property type="project" value="UniProtKB-SubCell"/>
</dbReference>
<dbReference type="GO" id="GO:0009636">
    <property type="term" value="P:response to toxic substance"/>
    <property type="evidence" value="ECO:0007669"/>
    <property type="project" value="UniProtKB-KW"/>
</dbReference>
<dbReference type="InterPro" id="IPR026288">
    <property type="entry name" value="SMR-like"/>
</dbReference>
<dbReference type="Pfam" id="PF15621">
    <property type="entry name" value="PROL5-SMR"/>
    <property type="match status" value="1"/>
</dbReference>
<comment type="function">
    <text>May play a role in protection or detoxification.</text>
</comment>
<comment type="subcellular location">
    <subcellularLocation>
        <location>Secreted</location>
    </subcellularLocation>
</comment>
<comment type="alternative products">
    <event type="alternative splicing"/>
    <isoform>
        <id>O35961-1</id>
        <name>Epsilon</name>
        <sequence type="displayed"/>
    </isoform>
    <isoform>
        <id>O09133-1</id>
        <name>Alpha</name>
        <sequence type="external"/>
    </isoform>
    <isoform>
        <id>O35982-1</id>
        <name>Beta</name>
        <sequence type="external"/>
    </isoform>
    <isoform>
        <id>O35985-1</id>
        <name>Gamma</name>
        <sequence type="external"/>
    </isoform>
    <isoform>
        <id>O35979-1</id>
        <name>Delta</name>
        <sequence type="external"/>
    </isoform>
</comment>
<comment type="miscellaneous">
    <molecule>Isoform Epsilon</molecule>
    <text>May be produced at very low levels due to a premature stop codon in the mRNA, leading to nonsense-mediated mRNA decay.</text>
</comment>
<protein>
    <recommendedName>
        <fullName>Submaxillary gland androgen-regulated protein 2, isoform epsilon</fullName>
    </recommendedName>
    <alternativeName>
        <fullName>Salivary protein MSG2, isoform epsilon</fullName>
    </alternativeName>
</protein>
<name>SMR2E_MOUSE</name>
<gene>
    <name type="primary">Smr2</name>
    <name type="synonym">Msg2</name>
    <name type="synonym">Vcs2</name>
</gene>
<reference key="1">
    <citation type="journal article" date="1997" name="Gene">
        <title>The mouse Vcs2 gene is a composite structure which evolved by gene fusion and encodes five distinct salivary mRNA species.</title>
        <authorList>
            <person name="Senorale-Pose M."/>
            <person name="Rougeon F."/>
        </authorList>
    </citation>
    <scope>NUCLEOTIDE SEQUENCE [GENOMIC DNA / MRNA] (ISOFORMS ALPHA; BETA; GAMMA; DELTA AND EPSILON)</scope>
    <source>
        <strain>BALB/cJ</strain>
        <tissue>Submandibular gland</tissue>
    </source>
</reference>
<sequence>MKALYMVFVLWVLIGCFLRCKERMGSEEKQAQEDPGDQDL</sequence>
<organism>
    <name type="scientific">Mus musculus</name>
    <name type="common">Mouse</name>
    <dbReference type="NCBI Taxonomy" id="10090"/>
    <lineage>
        <taxon>Eukaryota</taxon>
        <taxon>Metazoa</taxon>
        <taxon>Chordata</taxon>
        <taxon>Craniata</taxon>
        <taxon>Vertebrata</taxon>
        <taxon>Euteleostomi</taxon>
        <taxon>Mammalia</taxon>
        <taxon>Eutheria</taxon>
        <taxon>Euarchontoglires</taxon>
        <taxon>Glires</taxon>
        <taxon>Rodentia</taxon>
        <taxon>Myomorpha</taxon>
        <taxon>Muroidea</taxon>
        <taxon>Muridae</taxon>
        <taxon>Murinae</taxon>
        <taxon>Mus</taxon>
        <taxon>Mus</taxon>
    </lineage>
</organism>